<protein>
    <recommendedName>
        <fullName>Cytochrome b</fullName>
    </recommendedName>
    <alternativeName>
        <fullName>Complex III subunit 3</fullName>
    </alternativeName>
    <alternativeName>
        <fullName>Complex III subunit III</fullName>
    </alternativeName>
    <alternativeName>
        <fullName>Cytochrome b-c1 complex subunit 3</fullName>
    </alternativeName>
    <alternativeName>
        <fullName>Ubiquinol-cytochrome-c reductase complex cytochrome b subunit</fullName>
    </alternativeName>
</protein>
<evidence type="ECO:0000250" key="1"/>
<evidence type="ECO:0000250" key="2">
    <source>
        <dbReference type="UniProtKB" id="P00157"/>
    </source>
</evidence>
<evidence type="ECO:0000255" key="3">
    <source>
        <dbReference type="PROSITE-ProRule" id="PRU00967"/>
    </source>
</evidence>
<evidence type="ECO:0000255" key="4">
    <source>
        <dbReference type="PROSITE-ProRule" id="PRU00968"/>
    </source>
</evidence>
<gene>
    <name type="primary">MT-CYB</name>
    <name type="synonym">COB</name>
    <name type="synonym">CYTB</name>
    <name type="synonym">MTCYB</name>
</gene>
<accession>Q6XZN8</accession>
<organism>
    <name type="scientific">Akodon paranaensis</name>
    <name type="common">Parana grass mouse</name>
    <dbReference type="NCBI Taxonomy" id="230113"/>
    <lineage>
        <taxon>Eukaryota</taxon>
        <taxon>Metazoa</taxon>
        <taxon>Chordata</taxon>
        <taxon>Craniata</taxon>
        <taxon>Vertebrata</taxon>
        <taxon>Euteleostomi</taxon>
        <taxon>Mammalia</taxon>
        <taxon>Eutheria</taxon>
        <taxon>Euarchontoglires</taxon>
        <taxon>Glires</taxon>
        <taxon>Rodentia</taxon>
        <taxon>Myomorpha</taxon>
        <taxon>Muroidea</taxon>
        <taxon>Cricetidae</taxon>
        <taxon>Sigmodontinae</taxon>
        <taxon>Akodon</taxon>
    </lineage>
</organism>
<proteinExistence type="inferred from homology"/>
<feature type="chain" id="PRO_0000254977" description="Cytochrome b">
    <location>
        <begin position="1"/>
        <end position="379"/>
    </location>
</feature>
<feature type="transmembrane region" description="Helical" evidence="2">
    <location>
        <begin position="33"/>
        <end position="53"/>
    </location>
</feature>
<feature type="transmembrane region" description="Helical" evidence="2">
    <location>
        <begin position="77"/>
        <end position="98"/>
    </location>
</feature>
<feature type="transmembrane region" description="Helical" evidence="2">
    <location>
        <begin position="113"/>
        <end position="133"/>
    </location>
</feature>
<feature type="transmembrane region" description="Helical" evidence="2">
    <location>
        <begin position="178"/>
        <end position="198"/>
    </location>
</feature>
<feature type="transmembrane region" description="Helical" evidence="2">
    <location>
        <begin position="226"/>
        <end position="246"/>
    </location>
</feature>
<feature type="transmembrane region" description="Helical" evidence="2">
    <location>
        <begin position="288"/>
        <end position="308"/>
    </location>
</feature>
<feature type="transmembrane region" description="Helical" evidence="2">
    <location>
        <begin position="320"/>
        <end position="340"/>
    </location>
</feature>
<feature type="transmembrane region" description="Helical" evidence="2">
    <location>
        <begin position="347"/>
        <end position="367"/>
    </location>
</feature>
<feature type="binding site" description="axial binding residue" evidence="2">
    <location>
        <position position="83"/>
    </location>
    <ligand>
        <name>heme b</name>
        <dbReference type="ChEBI" id="CHEBI:60344"/>
        <label>b562</label>
    </ligand>
    <ligandPart>
        <name>Fe</name>
        <dbReference type="ChEBI" id="CHEBI:18248"/>
    </ligandPart>
</feature>
<feature type="binding site" description="axial binding residue" evidence="2">
    <location>
        <position position="97"/>
    </location>
    <ligand>
        <name>heme b</name>
        <dbReference type="ChEBI" id="CHEBI:60344"/>
        <label>b566</label>
    </ligand>
    <ligandPart>
        <name>Fe</name>
        <dbReference type="ChEBI" id="CHEBI:18248"/>
    </ligandPart>
</feature>
<feature type="binding site" description="axial binding residue" evidence="2">
    <location>
        <position position="182"/>
    </location>
    <ligand>
        <name>heme b</name>
        <dbReference type="ChEBI" id="CHEBI:60344"/>
        <label>b562</label>
    </ligand>
    <ligandPart>
        <name>Fe</name>
        <dbReference type="ChEBI" id="CHEBI:18248"/>
    </ligandPart>
</feature>
<feature type="binding site" description="axial binding residue" evidence="2">
    <location>
        <position position="196"/>
    </location>
    <ligand>
        <name>heme b</name>
        <dbReference type="ChEBI" id="CHEBI:60344"/>
        <label>b566</label>
    </ligand>
    <ligandPart>
        <name>Fe</name>
        <dbReference type="ChEBI" id="CHEBI:18248"/>
    </ligandPart>
</feature>
<feature type="binding site" evidence="2">
    <location>
        <position position="201"/>
    </location>
    <ligand>
        <name>a ubiquinone</name>
        <dbReference type="ChEBI" id="CHEBI:16389"/>
    </ligand>
</feature>
<reference key="1">
    <citation type="journal article" date="2003" name="Mamm. Biol.">
        <title>Phylogenetic analysis of sigmodontine rodents (Muroidea), with special reference to the akodont genus Deltamys.</title>
        <authorList>
            <person name="D'Elia G."/>
            <person name="Gonzalez E.M."/>
            <person name="Pardinas U.F.J."/>
        </authorList>
    </citation>
    <scope>NUCLEOTIDE SEQUENCE [GENOMIC DNA]</scope>
</reference>
<dbReference type="EMBL" id="AY195866">
    <property type="protein sequence ID" value="AAP34295.1"/>
    <property type="molecule type" value="Genomic_DNA"/>
</dbReference>
<dbReference type="SMR" id="Q6XZN8"/>
<dbReference type="GO" id="GO:0005743">
    <property type="term" value="C:mitochondrial inner membrane"/>
    <property type="evidence" value="ECO:0007669"/>
    <property type="project" value="UniProtKB-SubCell"/>
</dbReference>
<dbReference type="GO" id="GO:0045275">
    <property type="term" value="C:respiratory chain complex III"/>
    <property type="evidence" value="ECO:0007669"/>
    <property type="project" value="InterPro"/>
</dbReference>
<dbReference type="GO" id="GO:0046872">
    <property type="term" value="F:metal ion binding"/>
    <property type="evidence" value="ECO:0007669"/>
    <property type="project" value="UniProtKB-KW"/>
</dbReference>
<dbReference type="GO" id="GO:0008121">
    <property type="term" value="F:ubiquinol-cytochrome-c reductase activity"/>
    <property type="evidence" value="ECO:0007669"/>
    <property type="project" value="InterPro"/>
</dbReference>
<dbReference type="GO" id="GO:0006122">
    <property type="term" value="P:mitochondrial electron transport, ubiquinol to cytochrome c"/>
    <property type="evidence" value="ECO:0007669"/>
    <property type="project" value="TreeGrafter"/>
</dbReference>
<dbReference type="CDD" id="cd00290">
    <property type="entry name" value="cytochrome_b_C"/>
    <property type="match status" value="1"/>
</dbReference>
<dbReference type="CDD" id="cd00284">
    <property type="entry name" value="Cytochrome_b_N"/>
    <property type="match status" value="1"/>
</dbReference>
<dbReference type="FunFam" id="1.20.810.10:FF:000002">
    <property type="entry name" value="Cytochrome b"/>
    <property type="match status" value="1"/>
</dbReference>
<dbReference type="Gene3D" id="1.20.810.10">
    <property type="entry name" value="Cytochrome Bc1 Complex, Chain C"/>
    <property type="match status" value="1"/>
</dbReference>
<dbReference type="InterPro" id="IPR005798">
    <property type="entry name" value="Cyt_b/b6_C"/>
</dbReference>
<dbReference type="InterPro" id="IPR036150">
    <property type="entry name" value="Cyt_b/b6_C_sf"/>
</dbReference>
<dbReference type="InterPro" id="IPR005797">
    <property type="entry name" value="Cyt_b/b6_N"/>
</dbReference>
<dbReference type="InterPro" id="IPR027387">
    <property type="entry name" value="Cytb/b6-like_sf"/>
</dbReference>
<dbReference type="InterPro" id="IPR030689">
    <property type="entry name" value="Cytochrome_b"/>
</dbReference>
<dbReference type="InterPro" id="IPR048260">
    <property type="entry name" value="Cytochrome_b_C_euk/bac"/>
</dbReference>
<dbReference type="InterPro" id="IPR048259">
    <property type="entry name" value="Cytochrome_b_N_euk/bac"/>
</dbReference>
<dbReference type="InterPro" id="IPR016174">
    <property type="entry name" value="Di-haem_cyt_TM"/>
</dbReference>
<dbReference type="PANTHER" id="PTHR19271">
    <property type="entry name" value="CYTOCHROME B"/>
    <property type="match status" value="1"/>
</dbReference>
<dbReference type="PANTHER" id="PTHR19271:SF16">
    <property type="entry name" value="CYTOCHROME B"/>
    <property type="match status" value="1"/>
</dbReference>
<dbReference type="Pfam" id="PF00032">
    <property type="entry name" value="Cytochrom_B_C"/>
    <property type="match status" value="1"/>
</dbReference>
<dbReference type="Pfam" id="PF00033">
    <property type="entry name" value="Cytochrome_B"/>
    <property type="match status" value="1"/>
</dbReference>
<dbReference type="PIRSF" id="PIRSF038885">
    <property type="entry name" value="COB"/>
    <property type="match status" value="1"/>
</dbReference>
<dbReference type="SUPFAM" id="SSF81648">
    <property type="entry name" value="a domain/subunit of cytochrome bc1 complex (Ubiquinol-cytochrome c reductase)"/>
    <property type="match status" value="1"/>
</dbReference>
<dbReference type="SUPFAM" id="SSF81342">
    <property type="entry name" value="Transmembrane di-heme cytochromes"/>
    <property type="match status" value="1"/>
</dbReference>
<dbReference type="PROSITE" id="PS51003">
    <property type="entry name" value="CYTB_CTER"/>
    <property type="match status" value="1"/>
</dbReference>
<dbReference type="PROSITE" id="PS51002">
    <property type="entry name" value="CYTB_NTER"/>
    <property type="match status" value="1"/>
</dbReference>
<sequence length="379" mass="42549">MKILRKNHPLLKIVNHSFIDLPTPSNISSWWNFGSLLGMCLVIQILTGLFLAMHYTSDTTTAFSSVAHICRDVNYGWLIRYLHANGASMFFICLFIHVGRGIYYGSYVLLETWNIGIILLLTTMATAFVGYVLPWGQMSFWGATVITNLLSAIPYIGNTLVEWIWGGFSVDKATLTRFFAFHFILPFIIAAFALVHLLFLHETGSNNPSGLNSDSDKIPFHPYYTTKDLLGIFLLLLVLMILALFFPNVLGDPDNFTPANPLNTPAHIKPEWYFLFAYAILRSIPNKLGGVLALVLSILILATFPLLNTSKQHGLIFRPVTQVIYWIFIANLLVLTWIGGQPVEYPFTTIGQIASITYFAIIIILIPVSNTIENNIIKL</sequence>
<geneLocation type="mitochondrion"/>
<name>CYB_AKOPA</name>
<comment type="function">
    <text evidence="2">Component of the ubiquinol-cytochrome c reductase complex (complex III or cytochrome b-c1 complex) that is part of the mitochondrial respiratory chain. The b-c1 complex mediates electron transfer from ubiquinol to cytochrome c. Contributes to the generation of a proton gradient across the mitochondrial membrane that is then used for ATP synthesis.</text>
</comment>
<comment type="cofactor">
    <cofactor evidence="2">
        <name>heme b</name>
        <dbReference type="ChEBI" id="CHEBI:60344"/>
    </cofactor>
    <text evidence="2">Binds 2 heme b groups non-covalently.</text>
</comment>
<comment type="subunit">
    <text evidence="2">The cytochrome bc1 complex contains 11 subunits: 3 respiratory subunits (MT-CYB, CYC1 and UQCRFS1), 2 core proteins (UQCRC1 and UQCRC2) and 6 low-molecular weight proteins (UQCRH/QCR6, UQCRB/QCR7, UQCRQ/QCR8, UQCR10/QCR9, UQCR11/QCR10 and a cleavage product of UQCRFS1). This cytochrome bc1 complex then forms a dimer.</text>
</comment>
<comment type="subcellular location">
    <subcellularLocation>
        <location evidence="2">Mitochondrion inner membrane</location>
        <topology evidence="2">Multi-pass membrane protein</topology>
    </subcellularLocation>
</comment>
<comment type="miscellaneous">
    <text evidence="1">Heme 1 (or BL or b562) is low-potential and absorbs at about 562 nm, and heme 2 (or BH or b566) is high-potential and absorbs at about 566 nm.</text>
</comment>
<comment type="similarity">
    <text evidence="3 4">Belongs to the cytochrome b family.</text>
</comment>
<comment type="caution">
    <text evidence="2">The full-length protein contains only eight transmembrane helices, not nine as predicted by bioinformatics tools.</text>
</comment>
<keyword id="KW-0249">Electron transport</keyword>
<keyword id="KW-0349">Heme</keyword>
<keyword id="KW-0408">Iron</keyword>
<keyword id="KW-0472">Membrane</keyword>
<keyword id="KW-0479">Metal-binding</keyword>
<keyword id="KW-0496">Mitochondrion</keyword>
<keyword id="KW-0999">Mitochondrion inner membrane</keyword>
<keyword id="KW-0679">Respiratory chain</keyword>
<keyword id="KW-0812">Transmembrane</keyword>
<keyword id="KW-1133">Transmembrane helix</keyword>
<keyword id="KW-0813">Transport</keyword>
<keyword id="KW-0830">Ubiquinone</keyword>